<comment type="function">
    <text evidence="1 3">Subunit 8, of the mitochondrial membrane ATP synthase complex (F(1)F(0) ATP synthase or Complex V) that produces ATP from ADP in the presence of a proton gradient across the membrane which is generated by electron transport complexes of the respiratory chain. ATP synthase complex consist of a soluble F(1) head domain - the catalytic core - and a membrane F(1) domain - the membrane proton channel. These two domains are linked by a central stalk rotating inside the F(1) region and a stationary peripheral stalk. During catalysis, ATP synthesis in the catalytic domain of F(1) is coupled via a rotary mechanism of the central stalk subunits to proton translocation (By similarity). In vivo, can only synthesize ATP although its ATP hydrolase activity can be activated artificially in vitro (By similarity). Part of the complex F(0) domain (By similarity).</text>
</comment>
<comment type="subunit">
    <text evidence="1 5">Component of the ATP synthase complex composed at least of ATP5F1A/subunit alpha, ATP5F1B/subunit beta, ATP5MC1/subunit c (homooctomer), MT-ATP6/subunit a, MT-ATP8/subunit 8, ATP5ME/subunit e, ATP5MF/subunit f, ATP5MG/subunit g, ATP5MK/subunit k, ATP5MJ/subunit j, ATP5F1C/subunit gamma, ATP5F1D/subunit delta, ATP5F1E/subunit epsilon, ATP5PF/subunit F6, ATP5PB/subunit b, ATP5PD/subunit d, ATP5PO/subunit OSCP (PubMed:17575325). ATP synthase complex consists of a soluble F(1) head domain (subunits alpha(3) and beta(3)) - the catalytic core - and a membrane F(0) domain - the membrane proton channel (subunits c, a, 8, e, f, g, k and j). These two domains are linked by a central stalk (subunits gamma, delta, and epsilon) rotating inside the F1 region and a stationary peripheral stalk (subunits F6, b, d, and OSCP). Interacts with PRICKLE3 (By similarity).</text>
</comment>
<comment type="subcellular location">
    <subcellularLocation>
        <location>Mitochondrion membrane</location>
        <topology>Single-pass membrane protein</topology>
    </subcellularLocation>
</comment>
<comment type="similarity">
    <text evidence="6">Belongs to the ATPase protein 8 family.</text>
</comment>
<sequence>MPQLDTSTWFITIISSMATLFILFQLKISSQTFPAPPSPKTMATEKTNNPWESKWTKTYLPLSLPPQ</sequence>
<keyword id="KW-0007">Acetylation</keyword>
<keyword id="KW-0066">ATP synthesis</keyword>
<keyword id="KW-0138">CF(0)</keyword>
<keyword id="KW-0903">Direct protein sequencing</keyword>
<keyword id="KW-0375">Hydrogen ion transport</keyword>
<keyword id="KW-0406">Ion transport</keyword>
<keyword id="KW-0472">Membrane</keyword>
<keyword id="KW-0496">Mitochondrion</keyword>
<keyword id="KW-1185">Reference proteome</keyword>
<keyword id="KW-0812">Transmembrane</keyword>
<keyword id="KW-1133">Transmembrane helix</keyword>
<keyword id="KW-0813">Transport</keyword>
<dbReference type="EMBL" id="J01435">
    <property type="protein sequence ID" value="AAD15018.1"/>
    <property type="molecule type" value="Genomic_DNA"/>
</dbReference>
<dbReference type="EMBL" id="X14848">
    <property type="protein sequence ID" value="CAA32958.1"/>
    <property type="molecule type" value="Genomic_DNA"/>
</dbReference>
<dbReference type="EMBL" id="AY172581">
    <property type="protein sequence ID" value="AAN77598.1"/>
    <property type="molecule type" value="Genomic_DNA"/>
</dbReference>
<dbReference type="PIR" id="S04751">
    <property type="entry name" value="S04751"/>
</dbReference>
<dbReference type="RefSeq" id="AP_004896.1">
    <property type="nucleotide sequence ID" value="AC_000022.2"/>
</dbReference>
<dbReference type="RefSeq" id="YP_665633.1">
    <property type="nucleotide sequence ID" value="NC_001665.2"/>
</dbReference>
<dbReference type="SMR" id="P11608"/>
<dbReference type="CORUM" id="P11608"/>
<dbReference type="FunCoup" id="P11608">
    <property type="interactions" value="70"/>
</dbReference>
<dbReference type="STRING" id="10116.ENSRNOP00000042521"/>
<dbReference type="iPTMnet" id="P11608"/>
<dbReference type="PhosphoSitePlus" id="P11608"/>
<dbReference type="PaxDb" id="10116-ENSRNOP00000042521"/>
<dbReference type="Ensembl" id="ENSRNOT00000046201.3">
    <property type="protein sequence ID" value="ENSRNOP00000042521.3"/>
    <property type="gene ID" value="ENSRNOG00000033299.3"/>
</dbReference>
<dbReference type="GeneID" id="26196"/>
<dbReference type="KEGG" id="rno:26196"/>
<dbReference type="AGR" id="RGD:621240"/>
<dbReference type="CTD" id="4509"/>
<dbReference type="RGD" id="621240">
    <property type="gene designation" value="Mt-atp8"/>
</dbReference>
<dbReference type="eggNOG" id="ENOG502T21P">
    <property type="taxonomic scope" value="Eukaryota"/>
</dbReference>
<dbReference type="GeneTree" id="ENSGT00390000008771"/>
<dbReference type="HOGENOM" id="CLU_2811757_0_0_1"/>
<dbReference type="InParanoid" id="P11608"/>
<dbReference type="OMA" id="LDTSTWF"/>
<dbReference type="OrthoDB" id="74005at9989"/>
<dbReference type="Reactome" id="R-RNO-163210">
    <property type="pathway name" value="Formation of ATP by chemiosmotic coupling"/>
</dbReference>
<dbReference type="Reactome" id="R-RNO-8949613">
    <property type="pathway name" value="Cristae formation"/>
</dbReference>
<dbReference type="PRO" id="PR:P11608"/>
<dbReference type="Proteomes" id="UP000002494">
    <property type="component" value="Mitochondrion"/>
</dbReference>
<dbReference type="Bgee" id="ENSRNOG00000033299">
    <property type="expression patterns" value="Expressed in ovary and 19 other cell types or tissues"/>
</dbReference>
<dbReference type="ExpressionAtlas" id="P11608">
    <property type="expression patterns" value="baseline and differential"/>
</dbReference>
<dbReference type="GO" id="GO:0031966">
    <property type="term" value="C:mitochondrial membrane"/>
    <property type="evidence" value="ECO:0007669"/>
    <property type="project" value="UniProtKB-SubCell"/>
</dbReference>
<dbReference type="GO" id="GO:0045259">
    <property type="term" value="C:proton-transporting ATP synthase complex"/>
    <property type="evidence" value="ECO:0000314"/>
    <property type="project" value="UniProtKB"/>
</dbReference>
<dbReference type="GO" id="GO:0015078">
    <property type="term" value="F:proton transmembrane transporter activity"/>
    <property type="evidence" value="ECO:0007669"/>
    <property type="project" value="InterPro"/>
</dbReference>
<dbReference type="GO" id="GO:0042776">
    <property type="term" value="P:proton motive force-driven mitochondrial ATP synthesis"/>
    <property type="evidence" value="ECO:0000266"/>
    <property type="project" value="RGD"/>
</dbReference>
<dbReference type="GO" id="GO:0055093">
    <property type="term" value="P:response to hyperoxia"/>
    <property type="evidence" value="ECO:0000270"/>
    <property type="project" value="RGD"/>
</dbReference>
<dbReference type="InterPro" id="IPR039017">
    <property type="entry name" value="ATP8_mammal"/>
</dbReference>
<dbReference type="InterPro" id="IPR001421">
    <property type="entry name" value="ATP8_metazoa"/>
</dbReference>
<dbReference type="PANTHER" id="PTHR13722">
    <property type="entry name" value="ATP SYNTHASE PROTEIN 8"/>
    <property type="match status" value="1"/>
</dbReference>
<dbReference type="PANTHER" id="PTHR13722:SF0">
    <property type="entry name" value="ATP SYNTHASE PROTEIN 8"/>
    <property type="match status" value="1"/>
</dbReference>
<dbReference type="Pfam" id="PF00895">
    <property type="entry name" value="ATP-synt_8"/>
    <property type="match status" value="1"/>
</dbReference>
<accession>P11608</accession>
<accession>Q35736</accession>
<geneLocation type="mitochondrion"/>
<evidence type="ECO:0000250" key="1">
    <source>
        <dbReference type="UniProtKB" id="P03928"/>
    </source>
</evidence>
<evidence type="ECO:0000250" key="2">
    <source>
        <dbReference type="UniProtKB" id="P03930"/>
    </source>
</evidence>
<evidence type="ECO:0000250" key="3">
    <source>
        <dbReference type="UniProtKB" id="P19483"/>
    </source>
</evidence>
<evidence type="ECO:0000255" key="4"/>
<evidence type="ECO:0000269" key="5">
    <source>
    </source>
</evidence>
<evidence type="ECO:0000305" key="6"/>
<evidence type="ECO:0000312" key="7">
    <source>
        <dbReference type="RGD" id="621240"/>
    </source>
</evidence>
<feature type="chain" id="PRO_0000195578" description="ATP synthase F(0) complex subunit 8">
    <location>
        <begin position="1"/>
        <end position="67"/>
    </location>
</feature>
<feature type="transmembrane region" description="Helical" evidence="4">
    <location>
        <begin position="8"/>
        <end position="24"/>
    </location>
</feature>
<feature type="modified residue" description="N6-acetyllysine; alternate" evidence="2">
    <location>
        <position position="54"/>
    </location>
</feature>
<feature type="modified residue" description="N6-succinyllysine; alternate" evidence="2">
    <location>
        <position position="54"/>
    </location>
</feature>
<feature type="modified residue" description="N6-acetyllysine" evidence="2">
    <location>
        <position position="57"/>
    </location>
</feature>
<feature type="sequence conflict" description="In Ref. 1; AAD15018." evidence="6" ref="1">
    <original>I</original>
    <variation>N</variation>
    <location>
        <position position="22"/>
    </location>
</feature>
<feature type="sequence conflict" description="In Ref. 1; AAD15018 and 2; CAA32958." evidence="6" ref="1 2">
    <original>T</original>
    <variation>I</variation>
    <location>
        <position position="58"/>
    </location>
</feature>
<feature type="sequence conflict" description="In Ref. 1; AAD15018." evidence="6" ref="1">
    <original>L</original>
    <variation>F</variation>
    <location>
        <position position="60"/>
    </location>
</feature>
<proteinExistence type="evidence at protein level"/>
<organism>
    <name type="scientific">Rattus norvegicus</name>
    <name type="common">Rat</name>
    <dbReference type="NCBI Taxonomy" id="10116"/>
    <lineage>
        <taxon>Eukaryota</taxon>
        <taxon>Metazoa</taxon>
        <taxon>Chordata</taxon>
        <taxon>Craniata</taxon>
        <taxon>Vertebrata</taxon>
        <taxon>Euteleostomi</taxon>
        <taxon>Mammalia</taxon>
        <taxon>Eutheria</taxon>
        <taxon>Euarchontoglires</taxon>
        <taxon>Glires</taxon>
        <taxon>Rodentia</taxon>
        <taxon>Myomorpha</taxon>
        <taxon>Muroidea</taxon>
        <taxon>Muridae</taxon>
        <taxon>Murinae</taxon>
        <taxon>Rattus</taxon>
    </lineage>
</organism>
<protein>
    <recommendedName>
        <fullName evidence="6">ATP synthase F(0) complex subunit 8</fullName>
    </recommendedName>
    <alternativeName>
        <fullName>A6L</fullName>
    </alternativeName>
    <alternativeName>
        <fullName>Chargerin II</fullName>
    </alternativeName>
    <alternativeName>
        <fullName>F-ATPase subunit 8</fullName>
    </alternativeName>
</protein>
<reference key="1">
    <citation type="journal article" date="1981" name="Curr. Genet.">
        <title>Analysis of a DNA segment from rat liver mitochondria containing the genes for the cytochrome oxidase subunits I, II and III, ATPase subunit 6, and several tRNA genes.</title>
        <authorList>
            <person name="Grosskopf R."/>
            <person name="Feldmann H."/>
        </authorList>
    </citation>
    <scope>NUCLEOTIDE SEQUENCE [GENOMIC DNA]</scope>
    <source>
        <strain>Sprague-Dawley</strain>
        <tissue>Liver</tissue>
    </source>
</reference>
<reference key="2">
    <citation type="journal article" date="1989" name="J. Mol. Evol.">
        <title>The complete nucleotide sequence of the Rattus norvegicus mitochondrial genome: cryptic signals revealed by comparative analysis between vertebrates.</title>
        <authorList>
            <person name="Gadaleta G."/>
            <person name="Pepe G."/>
            <person name="de Candia G."/>
            <person name="Quagliariello C."/>
            <person name="Sbisa E."/>
            <person name="Saccone C."/>
        </authorList>
    </citation>
    <scope>NUCLEOTIDE SEQUENCE [GENOMIC DNA]</scope>
    <source>
        <strain>Wistar</strain>
    </source>
</reference>
<reference key="3">
    <citation type="journal article" date="1995" name="FASEB J.">
        <title>A point mutation in the mitochondrial DNA of diabetes-prone BHE/cdb rats.</title>
        <authorList>
            <person name="Mathews C.E."/>
            <person name="McGraw R.A."/>
            <person name="Berdanier C.D."/>
        </authorList>
    </citation>
    <scope>NUCLEOTIDE SEQUENCE [GENOMIC DNA]</scope>
    <source>
        <strain>BHE/CDB</strain>
        <strain>Sprague-Dawley</strain>
        <tissue>Liver</tissue>
    </source>
</reference>
<reference key="4">
    <citation type="journal article" date="2004" name="Nature">
        <title>Genome sequence of the Brown Norway rat yields insights into mammalian evolution.</title>
        <authorList>
            <person name="Gibbs R.A."/>
            <person name="Weinstock G.M."/>
            <person name="Metzker M.L."/>
            <person name="Muzny D.M."/>
            <person name="Sodergren E.J."/>
            <person name="Scherer S."/>
            <person name="Scott G."/>
            <person name="Steffen D."/>
            <person name="Worley K.C."/>
            <person name="Burch P.E."/>
            <person name="Okwuonu G."/>
            <person name="Hines S."/>
            <person name="Lewis L."/>
            <person name="Deramo C."/>
            <person name="Delgado O."/>
            <person name="Dugan-Rocha S."/>
            <person name="Miner G."/>
            <person name="Morgan M."/>
            <person name="Hawes A."/>
            <person name="Gill R."/>
            <person name="Holt R.A."/>
            <person name="Adams M.D."/>
            <person name="Amanatides P.G."/>
            <person name="Baden-Tillson H."/>
            <person name="Barnstead M."/>
            <person name="Chin S."/>
            <person name="Evans C.A."/>
            <person name="Ferriera S."/>
            <person name="Fosler C."/>
            <person name="Glodek A."/>
            <person name="Gu Z."/>
            <person name="Jennings D."/>
            <person name="Kraft C.L."/>
            <person name="Nguyen T."/>
            <person name="Pfannkoch C.M."/>
            <person name="Sitter C."/>
            <person name="Sutton G.G."/>
            <person name="Venter J.C."/>
            <person name="Woodage T."/>
            <person name="Smith D."/>
            <person name="Lee H.-M."/>
            <person name="Gustafson E."/>
            <person name="Cahill P."/>
            <person name="Kana A."/>
            <person name="Doucette-Stamm L."/>
            <person name="Weinstock K."/>
            <person name="Fechtel K."/>
            <person name="Weiss R.B."/>
            <person name="Dunn D.M."/>
            <person name="Green E.D."/>
            <person name="Blakesley R.W."/>
            <person name="Bouffard G.G."/>
            <person name="De Jong P.J."/>
            <person name="Osoegawa K."/>
            <person name="Zhu B."/>
            <person name="Marra M."/>
            <person name="Schein J."/>
            <person name="Bosdet I."/>
            <person name="Fjell C."/>
            <person name="Jones S."/>
            <person name="Krzywinski M."/>
            <person name="Mathewson C."/>
            <person name="Siddiqui A."/>
            <person name="Wye N."/>
            <person name="McPherson J."/>
            <person name="Zhao S."/>
            <person name="Fraser C.M."/>
            <person name="Shetty J."/>
            <person name="Shatsman S."/>
            <person name="Geer K."/>
            <person name="Chen Y."/>
            <person name="Abramzon S."/>
            <person name="Nierman W.C."/>
            <person name="Havlak P.H."/>
            <person name="Chen R."/>
            <person name="Durbin K.J."/>
            <person name="Egan A."/>
            <person name="Ren Y."/>
            <person name="Song X.-Z."/>
            <person name="Li B."/>
            <person name="Liu Y."/>
            <person name="Qin X."/>
            <person name="Cawley S."/>
            <person name="Cooney A.J."/>
            <person name="D'Souza L.M."/>
            <person name="Martin K."/>
            <person name="Wu J.Q."/>
            <person name="Gonzalez-Garay M.L."/>
            <person name="Jackson A.R."/>
            <person name="Kalafus K.J."/>
            <person name="McLeod M.P."/>
            <person name="Milosavljevic A."/>
            <person name="Virk D."/>
            <person name="Volkov A."/>
            <person name="Wheeler D.A."/>
            <person name="Zhang Z."/>
            <person name="Bailey J.A."/>
            <person name="Eichler E.E."/>
            <person name="Tuzun E."/>
            <person name="Birney E."/>
            <person name="Mongin E."/>
            <person name="Ureta-Vidal A."/>
            <person name="Woodwark C."/>
            <person name="Zdobnov E."/>
            <person name="Bork P."/>
            <person name="Suyama M."/>
            <person name="Torrents D."/>
            <person name="Alexandersson M."/>
            <person name="Trask B.J."/>
            <person name="Young J.M."/>
            <person name="Huang H."/>
            <person name="Wang H."/>
            <person name="Xing H."/>
            <person name="Daniels S."/>
            <person name="Gietzen D."/>
            <person name="Schmidt J."/>
            <person name="Stevens K."/>
            <person name="Vitt U."/>
            <person name="Wingrove J."/>
            <person name="Camara F."/>
            <person name="Mar Alba M."/>
            <person name="Abril J.F."/>
            <person name="Guigo R."/>
            <person name="Smit A."/>
            <person name="Dubchak I."/>
            <person name="Rubin E.M."/>
            <person name="Couronne O."/>
            <person name="Poliakov A."/>
            <person name="Huebner N."/>
            <person name="Ganten D."/>
            <person name="Goesele C."/>
            <person name="Hummel O."/>
            <person name="Kreitler T."/>
            <person name="Lee Y.-A."/>
            <person name="Monti J."/>
            <person name="Schulz H."/>
            <person name="Zimdahl H."/>
            <person name="Himmelbauer H."/>
            <person name="Lehrach H."/>
            <person name="Jacob H.J."/>
            <person name="Bromberg S."/>
            <person name="Gullings-Handley J."/>
            <person name="Jensen-Seaman M.I."/>
            <person name="Kwitek A.E."/>
            <person name="Lazar J."/>
            <person name="Pasko D."/>
            <person name="Tonellato P.J."/>
            <person name="Twigger S."/>
            <person name="Ponting C.P."/>
            <person name="Duarte J.M."/>
            <person name="Rice S."/>
            <person name="Goodstadt L."/>
            <person name="Beatson S.A."/>
            <person name="Emes R.D."/>
            <person name="Winter E.E."/>
            <person name="Webber C."/>
            <person name="Brandt P."/>
            <person name="Nyakatura G."/>
            <person name="Adetobi M."/>
            <person name="Chiaromonte F."/>
            <person name="Elnitski L."/>
            <person name="Eswara P."/>
            <person name="Hardison R.C."/>
            <person name="Hou M."/>
            <person name="Kolbe D."/>
            <person name="Makova K."/>
            <person name="Miller W."/>
            <person name="Nekrutenko A."/>
            <person name="Riemer C."/>
            <person name="Schwartz S."/>
            <person name="Taylor J."/>
            <person name="Yang S."/>
            <person name="Zhang Y."/>
            <person name="Lindpaintner K."/>
            <person name="Andrews T.D."/>
            <person name="Caccamo M."/>
            <person name="Clamp M."/>
            <person name="Clarke L."/>
            <person name="Curwen V."/>
            <person name="Durbin R.M."/>
            <person name="Eyras E."/>
            <person name="Searle S.M."/>
            <person name="Cooper G.M."/>
            <person name="Batzoglou S."/>
            <person name="Brudno M."/>
            <person name="Sidow A."/>
            <person name="Stone E.A."/>
            <person name="Payseur B.A."/>
            <person name="Bourque G."/>
            <person name="Lopez-Otin C."/>
            <person name="Puente X.S."/>
            <person name="Chakrabarti K."/>
            <person name="Chatterji S."/>
            <person name="Dewey C."/>
            <person name="Pachter L."/>
            <person name="Bray N."/>
            <person name="Yap V.B."/>
            <person name="Caspi A."/>
            <person name="Tesler G."/>
            <person name="Pevzner P.A."/>
            <person name="Haussler D."/>
            <person name="Roskin K.M."/>
            <person name="Baertsch R."/>
            <person name="Clawson H."/>
            <person name="Furey T.S."/>
            <person name="Hinrichs A.S."/>
            <person name="Karolchik D."/>
            <person name="Kent W.J."/>
            <person name="Rosenbloom K.R."/>
            <person name="Trumbower H."/>
            <person name="Weirauch M."/>
            <person name="Cooper D.N."/>
            <person name="Stenson P.D."/>
            <person name="Ma B."/>
            <person name="Brent M."/>
            <person name="Arumugam M."/>
            <person name="Shteynberg D."/>
            <person name="Copley R.R."/>
            <person name="Taylor M.S."/>
            <person name="Riethman H."/>
            <person name="Mudunuri U."/>
            <person name="Peterson J."/>
            <person name="Guyer M."/>
            <person name="Felsenfeld A."/>
            <person name="Old S."/>
            <person name="Mockrin S."/>
            <person name="Collins F.S."/>
        </authorList>
    </citation>
    <scope>NUCLEOTIDE SEQUENCE [LARGE SCALE GENOMIC DNA]</scope>
    <source>
        <strain>Brown Norway</strain>
    </source>
</reference>
<reference key="5">
    <citation type="journal article" date="1988" name="J. Biol. Chem.">
        <title>A hydrophobic protein, chargerin II, purified from rat liver mitochondria is encoded in the unidentified reading frame A6L of mitochondrial DNA.</title>
        <authorList>
            <person name="Higuti T."/>
            <person name="Negama T."/>
            <person name="Takigawa M."/>
            <person name="Uchida J."/>
            <person name="Yamane T."/>
            <person name="Asai T."/>
            <person name="Tani I."/>
            <person name="Oeda K."/>
            <person name="Shimizu M."/>
            <person name="Nakamura K."/>
            <person name="Ohkawa H."/>
        </authorList>
    </citation>
    <scope>PROTEIN SEQUENCE OF 55-66</scope>
</reference>
<reference key="6">
    <citation type="journal article" date="2007" name="Mol. Cell. Proteomics">
        <title>Identification of two proteins associated with mammalian ATP synthase.</title>
        <authorList>
            <person name="Meyer B."/>
            <person name="Wittig I."/>
            <person name="Trifilieff E."/>
            <person name="Karas M."/>
            <person name="Schaegger H."/>
        </authorList>
    </citation>
    <scope>IDENTIFICATION BY MASS SPECTROMETRY</scope>
    <scope>IDENTIFICATION IN THE ATP SYNTHASE COMPLEX</scope>
</reference>
<name>ATP8_RAT</name>
<gene>
    <name evidence="7" type="primary">Mt-atp8</name>
    <name type="synonym">Atp8</name>
    <name type="synonym">Atpase8</name>
    <name type="synonym">Mtatp8</name>
</gene>